<gene>
    <name type="primary">KLHL24</name>
    <name type="synonym">DRE1</name>
</gene>
<accession>Q6TFL4</accession>
<accession>A5PLN8</accession>
<accession>Q9H620</accession>
<accession>Q9NXT9</accession>
<organism>
    <name type="scientific">Homo sapiens</name>
    <name type="common">Human</name>
    <dbReference type="NCBI Taxonomy" id="9606"/>
    <lineage>
        <taxon>Eukaryota</taxon>
        <taxon>Metazoa</taxon>
        <taxon>Chordata</taxon>
        <taxon>Craniata</taxon>
        <taxon>Vertebrata</taxon>
        <taxon>Euteleostomi</taxon>
        <taxon>Mammalia</taxon>
        <taxon>Eutheria</taxon>
        <taxon>Euarchontoglires</taxon>
        <taxon>Primates</taxon>
        <taxon>Haplorrhini</taxon>
        <taxon>Catarrhini</taxon>
        <taxon>Hominidae</taxon>
        <taxon>Homo</taxon>
    </lineage>
</organism>
<feature type="chain" id="PRO_0000261594" description="Kelch-like protein 24">
    <location>
        <begin position="1"/>
        <end position="600"/>
    </location>
</feature>
<feature type="domain" description="BTB" evidence="2">
    <location>
        <begin position="66"/>
        <end position="133"/>
    </location>
</feature>
<feature type="domain" description="BACK">
    <location>
        <begin position="168"/>
        <end position="270"/>
    </location>
</feature>
<feature type="repeat" description="Kelch 1">
    <location>
        <begin position="314"/>
        <end position="363"/>
    </location>
</feature>
<feature type="repeat" description="Kelch 2">
    <location>
        <begin position="365"/>
        <end position="407"/>
    </location>
</feature>
<feature type="repeat" description="Kelch 3">
    <location>
        <begin position="408"/>
        <end position="454"/>
    </location>
</feature>
<feature type="repeat" description="Kelch 4">
    <location>
        <begin position="456"/>
        <end position="502"/>
    </location>
</feature>
<feature type="repeat" description="Kelch 5">
    <location>
        <begin position="504"/>
        <end position="544"/>
    </location>
</feature>
<feature type="repeat" description="Kelch 6">
    <location>
        <begin position="546"/>
        <end position="592"/>
    </location>
</feature>
<feature type="splice variant" id="VSP_028644" description="In isoform 2." evidence="6">
    <original>ENC</original>
    <variation>VIT</variation>
    <location>
        <begin position="535"/>
        <end position="537"/>
    </location>
</feature>
<feature type="splice variant" id="VSP_028645" description="In isoform 2." evidence="6">
    <location>
        <begin position="538"/>
        <end position="600"/>
    </location>
</feature>
<feature type="sequence variant" id="VAR_088094" description="In CMH29; loss-of-function variant unable to rescue heart defects and cardiac failure in zebrafish morphants." evidence="5">
    <original>R</original>
    <variation>H</variation>
    <location>
        <position position="306"/>
    </location>
</feature>
<feature type="sequence variant" id="VAR_088095" description="In CMH29; loss-of-function variant unable to rescue heart defects and cardiac failure in zebrafish morphants." evidence="5">
    <location>
        <begin position="350"/>
        <end position="600"/>
    </location>
</feature>
<feature type="mutagenesis site" description="Increased protein stability." evidence="3">
    <original>K</original>
    <variation>R</variation>
    <location>
        <position position="32"/>
    </location>
</feature>
<feature type="mutagenesis site" description="Weak interaction with CUL3. Weak autoubiquitination." evidence="3">
    <original>Y</original>
    <variation>A</variation>
    <location>
        <position position="90"/>
    </location>
</feature>
<feature type="mutagenesis site" description="Weak interaction with CUL3. Weak autoubiquitination." evidence="3">
    <original>A</original>
    <variation>V</variation>
    <location>
        <position position="175"/>
    </location>
</feature>
<feature type="sequence conflict" description="In Ref. 3; BAA90921." evidence="7" ref="3">
    <original>P</original>
    <variation>R</variation>
    <location>
        <position position="489"/>
    </location>
</feature>
<feature type="sequence conflict" description="In Ref. 3; BAB15447." evidence="7" ref="3">
    <original>Y</original>
    <variation>C</variation>
    <location>
        <position position="515"/>
    </location>
</feature>
<feature type="sequence conflict" description="In Ref. 5; AAI42994." evidence="7" ref="5">
    <original>N</original>
    <variation>D</variation>
    <location>
        <position position="536"/>
    </location>
</feature>
<reference key="1">
    <citation type="submission" date="2003-09" db="EMBL/GenBank/DDBJ databases">
        <authorList>
            <person name="Huang C.Q."/>
            <person name="Wu S.L."/>
            <person name="Liu S."/>
        </authorList>
    </citation>
    <scope>NUCLEOTIDE SEQUENCE [MRNA] (ISOFORM 1)</scope>
</reference>
<reference key="2">
    <citation type="submission" date="2006-08" db="EMBL/GenBank/DDBJ databases">
        <title>Function analysis on a microRNA encoded by HSV-1.</title>
        <authorList>
            <person name="Zhang X.-M."/>
            <person name="Liu L.-D."/>
            <person name="Li Q.-H."/>
        </authorList>
    </citation>
    <scope>NUCLEOTIDE SEQUENCE [MRNA] (ISOFORM 1)</scope>
</reference>
<reference key="3">
    <citation type="journal article" date="2004" name="Nat. Genet.">
        <title>Complete sequencing and characterization of 21,243 full-length human cDNAs.</title>
        <authorList>
            <person name="Ota T."/>
            <person name="Suzuki Y."/>
            <person name="Nishikawa T."/>
            <person name="Otsuki T."/>
            <person name="Sugiyama T."/>
            <person name="Irie R."/>
            <person name="Wakamatsu A."/>
            <person name="Hayashi K."/>
            <person name="Sato H."/>
            <person name="Nagai K."/>
            <person name="Kimura K."/>
            <person name="Makita H."/>
            <person name="Sekine M."/>
            <person name="Obayashi M."/>
            <person name="Nishi T."/>
            <person name="Shibahara T."/>
            <person name="Tanaka T."/>
            <person name="Ishii S."/>
            <person name="Yamamoto J."/>
            <person name="Saito K."/>
            <person name="Kawai Y."/>
            <person name="Isono Y."/>
            <person name="Nakamura Y."/>
            <person name="Nagahari K."/>
            <person name="Murakami K."/>
            <person name="Yasuda T."/>
            <person name="Iwayanagi T."/>
            <person name="Wagatsuma M."/>
            <person name="Shiratori A."/>
            <person name="Sudo H."/>
            <person name="Hosoiri T."/>
            <person name="Kaku Y."/>
            <person name="Kodaira H."/>
            <person name="Kondo H."/>
            <person name="Sugawara M."/>
            <person name="Takahashi M."/>
            <person name="Kanda K."/>
            <person name="Yokoi T."/>
            <person name="Furuya T."/>
            <person name="Kikkawa E."/>
            <person name="Omura Y."/>
            <person name="Abe K."/>
            <person name="Kamihara K."/>
            <person name="Katsuta N."/>
            <person name="Sato K."/>
            <person name="Tanikawa M."/>
            <person name="Yamazaki M."/>
            <person name="Ninomiya K."/>
            <person name="Ishibashi T."/>
            <person name="Yamashita H."/>
            <person name="Murakawa K."/>
            <person name="Fujimori K."/>
            <person name="Tanai H."/>
            <person name="Kimata M."/>
            <person name="Watanabe M."/>
            <person name="Hiraoka S."/>
            <person name="Chiba Y."/>
            <person name="Ishida S."/>
            <person name="Ono Y."/>
            <person name="Takiguchi S."/>
            <person name="Watanabe S."/>
            <person name="Yosida M."/>
            <person name="Hotuta T."/>
            <person name="Kusano J."/>
            <person name="Kanehori K."/>
            <person name="Takahashi-Fujii A."/>
            <person name="Hara H."/>
            <person name="Tanase T.-O."/>
            <person name="Nomura Y."/>
            <person name="Togiya S."/>
            <person name="Komai F."/>
            <person name="Hara R."/>
            <person name="Takeuchi K."/>
            <person name="Arita M."/>
            <person name="Imose N."/>
            <person name="Musashino K."/>
            <person name="Yuuki H."/>
            <person name="Oshima A."/>
            <person name="Sasaki N."/>
            <person name="Aotsuka S."/>
            <person name="Yoshikawa Y."/>
            <person name="Matsunawa H."/>
            <person name="Ichihara T."/>
            <person name="Shiohata N."/>
            <person name="Sano S."/>
            <person name="Moriya S."/>
            <person name="Momiyama H."/>
            <person name="Satoh N."/>
            <person name="Takami S."/>
            <person name="Terashima Y."/>
            <person name="Suzuki O."/>
            <person name="Nakagawa S."/>
            <person name="Senoh A."/>
            <person name="Mizoguchi H."/>
            <person name="Goto Y."/>
            <person name="Shimizu F."/>
            <person name="Wakebe H."/>
            <person name="Hishigaki H."/>
            <person name="Watanabe T."/>
            <person name="Sugiyama A."/>
            <person name="Takemoto M."/>
            <person name="Kawakami B."/>
            <person name="Yamazaki M."/>
            <person name="Watanabe K."/>
            <person name="Kumagai A."/>
            <person name="Itakura S."/>
            <person name="Fukuzumi Y."/>
            <person name="Fujimori Y."/>
            <person name="Komiyama M."/>
            <person name="Tashiro H."/>
            <person name="Tanigami A."/>
            <person name="Fujiwara T."/>
            <person name="Ono T."/>
            <person name="Yamada K."/>
            <person name="Fujii Y."/>
            <person name="Ozaki K."/>
            <person name="Hirao M."/>
            <person name="Ohmori Y."/>
            <person name="Kawabata A."/>
            <person name="Hikiji T."/>
            <person name="Kobatake N."/>
            <person name="Inagaki H."/>
            <person name="Ikema Y."/>
            <person name="Okamoto S."/>
            <person name="Okitani R."/>
            <person name="Kawakami T."/>
            <person name="Noguchi S."/>
            <person name="Itoh T."/>
            <person name="Shigeta K."/>
            <person name="Senba T."/>
            <person name="Matsumura K."/>
            <person name="Nakajima Y."/>
            <person name="Mizuno T."/>
            <person name="Morinaga M."/>
            <person name="Sasaki M."/>
            <person name="Togashi T."/>
            <person name="Oyama M."/>
            <person name="Hata H."/>
            <person name="Watanabe M."/>
            <person name="Komatsu T."/>
            <person name="Mizushima-Sugano J."/>
            <person name="Satoh T."/>
            <person name="Shirai Y."/>
            <person name="Takahashi Y."/>
            <person name="Nakagawa K."/>
            <person name="Okumura K."/>
            <person name="Nagase T."/>
            <person name="Nomura N."/>
            <person name="Kikuchi H."/>
            <person name="Masuho Y."/>
            <person name="Yamashita R."/>
            <person name="Nakai K."/>
            <person name="Yada T."/>
            <person name="Nakamura Y."/>
            <person name="Ohara O."/>
            <person name="Isogai T."/>
            <person name="Sugano S."/>
        </authorList>
    </citation>
    <scope>NUCLEOTIDE SEQUENCE [LARGE SCALE MRNA] (ISOFORM 1)</scope>
    <scope>NUCLEOTIDE SEQUENCE [LARGE SCALE MRNA] OF 109-573 (ISOFORM 2)</scope>
    <source>
        <tissue>Colon</tissue>
    </source>
</reference>
<reference key="4">
    <citation type="journal article" date="2007" name="BMC Genomics">
        <title>The full-ORF clone resource of the German cDNA consortium.</title>
        <authorList>
            <person name="Bechtel S."/>
            <person name="Rosenfelder H."/>
            <person name="Duda A."/>
            <person name="Schmidt C.P."/>
            <person name="Ernst U."/>
            <person name="Wellenreuther R."/>
            <person name="Mehrle A."/>
            <person name="Schuster C."/>
            <person name="Bahr A."/>
            <person name="Bloecker H."/>
            <person name="Heubner D."/>
            <person name="Hoerlein A."/>
            <person name="Michel G."/>
            <person name="Wedler H."/>
            <person name="Koehrer K."/>
            <person name="Ottenwaelder B."/>
            <person name="Poustka A."/>
            <person name="Wiemann S."/>
            <person name="Schupp I."/>
        </authorList>
    </citation>
    <scope>NUCLEOTIDE SEQUENCE [LARGE SCALE MRNA] (ISOFORM 1)</scope>
    <source>
        <tissue>Colon endothelium</tissue>
        <tissue>Rectum tumor</tissue>
    </source>
</reference>
<reference key="5">
    <citation type="journal article" date="2004" name="Genome Res.">
        <title>The status, quality, and expansion of the NIH full-length cDNA project: the Mammalian Gene Collection (MGC).</title>
        <authorList>
            <consortium name="The MGC Project Team"/>
        </authorList>
    </citation>
    <scope>NUCLEOTIDE SEQUENCE [LARGE SCALE MRNA] (ISOFORM 1)</scope>
</reference>
<reference key="6">
    <citation type="journal article" date="2016" name="Am. J. Hum. Genet.">
        <title>Monoallelic Mutations in the Translation Initiation Codon of KLHL24 Cause Skin Fragility.</title>
        <authorList>
            <person name="He Y."/>
            <person name="Maier K."/>
            <person name="Leppert J."/>
            <person name="Hausser I."/>
            <person name="Schwieger-Briel A."/>
            <person name="Weibel L."/>
            <person name="Theiler M."/>
            <person name="Kiritsi D."/>
            <person name="Busch H."/>
            <person name="Boerries M."/>
            <person name="Hannula-Jouppi K."/>
            <person name="Heikkilae H."/>
            <person name="Tasanen K."/>
            <person name="Castiglia D."/>
            <person name="Zambruno G."/>
            <person name="Has C."/>
        </authorList>
    </citation>
    <scope>FUNCTION</scope>
    <scope>TISSUE SPECIFICITY</scope>
    <scope>SUBCELLULAR LOCATION</scope>
    <scope>INVOLVEMENT IN EBS6</scope>
</reference>
<reference key="7">
    <citation type="journal article" date="2016" name="Nat. Genet.">
        <title>Stabilizing mutations of KLHL24 ubiquitin ligase cause loss of keratin 14 and human skin fragility.</title>
        <authorList>
            <person name="Lin Z."/>
            <person name="Li S."/>
            <person name="Feng C."/>
            <person name="Yang S."/>
            <person name="Wang H."/>
            <person name="Ma D."/>
            <person name="Zhang J."/>
            <person name="Gou M."/>
            <person name="Bu D."/>
            <person name="Zhang T."/>
            <person name="Kong X."/>
            <person name="Wang X."/>
            <person name="Sarig O."/>
            <person name="Ren Y."/>
            <person name="Dai L."/>
            <person name="Liu H."/>
            <person name="Zhang J."/>
            <person name="Li F."/>
            <person name="Hu Y."/>
            <person name="Padalon-Brauch G."/>
            <person name="Vodo D."/>
            <person name="Zhou F."/>
            <person name="Chen T."/>
            <person name="Deng H."/>
            <person name="Sprecher E."/>
            <person name="Yang Y."/>
            <person name="Tan X."/>
        </authorList>
    </citation>
    <scope>FUNCTION</scope>
    <scope>TISSUE SPECIFICITY</scope>
    <scope>MUTAGENESIS OF LYS-32; TYR-90 AND ALA-175</scope>
    <scope>IDENTIFICATION IN THE BCR(KLHL24) COMPLEX</scope>
    <scope>INTERACTION WITH CUL3 AND KRT14</scope>
    <scope>AUTOUBIQUITINATION</scope>
    <scope>INVOLVEMENT IN EBS6</scope>
</reference>
<reference key="8">
    <citation type="journal article" date="2019" name="Hum. Mol. Genet.">
        <title>Cardiomyopathy with lethal arrhythmias associated with inactivation of KLHL24.</title>
        <authorList>
            <person name="Hedberg-Oldfors C."/>
            <person name="Abramsson A."/>
            <person name="Osborn D.P.S."/>
            <person name="Danielsson O."/>
            <person name="Fazlinezhad A."/>
            <person name="Nilipour Y."/>
            <person name="Huebbert L."/>
            <person name="Nennesmo I."/>
            <person name="Visuttijai K."/>
            <person name="Bharj J."/>
            <person name="Petropoulou E."/>
            <person name="Shoreim A."/>
            <person name="Vona B."/>
            <person name="Ahangari N."/>
            <person name="Lopez M.D."/>
            <person name="Doosti M."/>
            <person name="Banote R.K."/>
            <person name="Maroofian R."/>
            <person name="Edling M."/>
            <person name="Taherpour M."/>
            <person name="Zetterberg H."/>
            <person name="Karimiani E.G."/>
            <person name="Oldfors A."/>
            <person name="Jamshidi Y."/>
        </authorList>
    </citation>
    <scope>VARIANTS CMH29 HIS-306 AND 350-GLU--LEU-600 DEL</scope>
    <scope>CHARACTERIZATION OF VARIANTS CMH29 HIS-306 AND 350-GLU--LEU-600</scope>
    <scope>INVOLVEMENT IN CMH29</scope>
    <scope>TISSUE SPECIFICITY</scope>
    <scope>FUNCTION</scope>
</reference>
<keyword id="KW-0025">Alternative splicing</keyword>
<keyword id="KW-0122">Cardiomyopathy</keyword>
<keyword id="KW-0965">Cell junction</keyword>
<keyword id="KW-0966">Cell projection</keyword>
<keyword id="KW-0963">Cytoplasm</keyword>
<keyword id="KW-0225">Disease variant</keyword>
<keyword id="KW-0263">Epidermolysis bullosa</keyword>
<keyword id="KW-0880">Kelch repeat</keyword>
<keyword id="KW-1267">Proteomics identification</keyword>
<keyword id="KW-1185">Reference proteome</keyword>
<keyword id="KW-0677">Repeat</keyword>
<keyword id="KW-0832">Ubl conjugation</keyword>
<keyword id="KW-0833">Ubl conjugation pathway</keyword>
<comment type="function">
    <text evidence="1 3 4 5">Necessary to maintain the balance between intermediate filament stability and degradation, a process that is essential for skin integrity (PubMed:27889062). As part of the BCR(KLHL24) E3 ubiquitin ligase complex, mediates ubiquitination of KRT14 and controls its levels during keratinocytes differentiation (PubMed:27798626). Specifically reduces kainate receptor-mediated currents in hippocampal neurons, most probably by modulating channel properties (By similarity). Has a crucial role in cardiac development and function (PubMed:30715372).</text>
</comment>
<comment type="subunit">
    <text evidence="1 3">Forms homodimers. Interacts with GRIK2 (By similarity). Component of the BCR(KLHL24) E3 ubiquitin ligase complex, composed of CUL3, RBX1 and KLHL24. Interacts with CUL3. Interacts with KRT14 (PubMed:27798626).</text>
</comment>
<comment type="interaction">
    <interactant intactId="EBI-2510117">
        <id>Q6TFL4</id>
    </interactant>
    <interactant intactId="EBI-10270867">
        <id>Q8NEY4-2</id>
        <label>ATP6V1C2</label>
    </interactant>
    <organismsDiffer>false</organismsDiffer>
    <experiments>3</experiments>
</comment>
<comment type="interaction">
    <interactant intactId="EBI-2510117">
        <id>Q6TFL4</id>
    </interactant>
    <interactant intactId="EBI-740929">
        <id>Q53G59</id>
        <label>KLHL12</label>
    </interactant>
    <organismsDiffer>false</organismsDiffer>
    <experiments>6</experiments>
</comment>
<comment type="interaction">
    <interactant intactId="EBI-2510117">
        <id>Q6TFL4</id>
    </interactant>
    <interactant intactId="EBI-713635">
        <id>O43639</id>
        <label>NCK2</label>
    </interactant>
    <organismsDiffer>false</organismsDiffer>
    <experiments>3</experiments>
</comment>
<comment type="interaction">
    <interactant intactId="EBI-2510117">
        <id>Q6TFL4</id>
    </interactant>
    <interactant intactId="EBI-5235703">
        <id>Q6ZMI0</id>
        <label>PPP1R21</label>
    </interactant>
    <organismsDiffer>false</organismsDiffer>
    <experiments>2</experiments>
</comment>
<comment type="subcellular location">
    <subcellularLocation>
        <location>Perikaryon</location>
    </subcellularLocation>
    <subcellularLocation>
        <location evidence="1">Cell projection</location>
        <location evidence="1">Axon</location>
    </subcellularLocation>
    <subcellularLocation>
        <location evidence="1 4">Cytoplasm</location>
    </subcellularLocation>
    <subcellularLocation>
        <location evidence="4">Cell junction</location>
        <location evidence="4">Desmosome</location>
    </subcellularLocation>
    <subcellularLocation>
        <location evidence="4">Cell junction</location>
        <location evidence="4">Adherens junction</location>
    </subcellularLocation>
</comment>
<comment type="alternative products">
    <event type="alternative splicing"/>
    <isoform>
        <id>Q6TFL4-1</id>
        <name>1</name>
        <sequence type="displayed"/>
    </isoform>
    <isoform>
        <id>Q6TFL4-2</id>
        <name>2</name>
        <sequence type="described" ref="VSP_028644 VSP_028645"/>
    </isoform>
</comment>
<comment type="tissue specificity">
    <text evidence="3 4 5">Expressed in the skin (PubMed:27798626, PubMed:27889062). Found in keratinocytes, dermal fibroblasts, and melanocytes (PubMed:27889062). Basal-layer keratinocytes have lower KLHL24 expression than suprabasal keratinocytes (PubMed:27798626). Expressed in the brain, spinal cord, liver, testis, heart and at higher levels in the skeletal muscle (PubMed:30715372).</text>
</comment>
<comment type="PTM">
    <text evidence="3">Autoubiquitinated. Autoubiquitination leads to proteasomal degradation and is necessary to control KLHL24 levels.</text>
</comment>
<comment type="disease" evidence="3 4">
    <disease id="DI-04933">
        <name>Epidermolysis bullosa simplex 6, generalized intermediate, with or without cardiomyopathy</name>
        <acronym>EBS6</acronym>
        <description>A form of epidermolysis bullosa, a genodermatosis characterized by recurrent blistering, fragility of the skin and mucosal epithelia, and erosions caused by minor mechanical trauma. EBS6 is an autosomal dominant disorder presenting at birth with extensive skin defects on the extremities, leaving behind hypopigmentation and atrophy with a whirled pattern. Cutaneous fragility and generalized blistering persist during childhood and decrease in adulthood. Adult patients have dyspigmentation and atrophy of the skin, scars, follicular atrophoderma, sparse body hair, progressive diffuse alopecia of the scalp, diffuse palmoplantar keratoderma, and nail changes.</description>
        <dbReference type="MIM" id="617294"/>
    </disease>
    <text evidence="3">The disease is caused by variants affecting the gene represented in this entry. Gain-of-function mutations that lead to excessive ubiquitination and degradation of KRT14 result in compromised mechanical integrity of basal keratinocytes. Under this pathological condition, trivial mechanical stress can induce blister formation at the basal layer of skin.</text>
</comment>
<comment type="disease" evidence="5">
    <disease id="DI-06602">
        <name>Cardiomyopathy, familial hypertrophic, 29, with polyglucosan bodies</name>
        <acronym>CMH29</acronym>
        <description>A form of hypertrophic cardiomyopathy, a heart disorder characterized by ventricular hypertrophy, which is usually asymmetric and often involves the interventricular septum. The symptoms include dyspnea, syncope, collapse, palpitations, and chest pain. They can be readily provoked by exercise. The disorder has inter- and intrafamilial variability ranging from benign to malignant forms with high risk of cardiac failure and sudden cardiac death. CMH29 is an autosomal recessive form associated with a poor prognosis due to lethal arrhythmias and cardiac failure. Cardiac muscle biopsies show intermyofibrillar accumulation of glycogen and polyglucosan bodies within cardiomyocytes. Intermyofibrillar glycogen accumulation is also present in skeletal muscle.</description>
        <dbReference type="MIM" id="620236"/>
    </disease>
    <text>The disease is caused by variants affecting the gene represented in this entry.</text>
</comment>
<comment type="sequence caution" evidence="7">
    <conflict type="erroneous initiation">
        <sequence resource="EMBL-CDS" id="BAA90921"/>
    </conflict>
</comment>
<comment type="sequence caution" evidence="7">
    <conflict type="miscellaneous discrepancy">
        <sequence resource="EMBL-CDS" id="BAB15447"/>
    </conflict>
    <text>Aberrant splicing.</text>
</comment>
<name>KLH24_HUMAN</name>
<sequence>MVLILGRRLNREDLGVRDSPATKRKVFEMDPKSLTGHEFFDFSSGSSHAENILQIFNEFRDSRLFTDVIICVEGKEFPCHRAVLSACSSYFRAMFCNDHRESREMLVEINGILAEAMECFLQYVYTGKVKITTENVQYLFETSSLFQISVLRDACAKFLEEQLDPCNCLGIQRFADTHSLKTLFTKCKNFALQTFEDVSQHEEFLELDKDELIDYICSDELVIGKEEMVFEAVMRWVYRAVDLRRPLLHELLTHVRLPLLHPNYFVQTVEVDQLIQNSPECYQLLHEARRYHILGNEMMSPRTRPRRSTGYSEVIVVVGGCERVGGFNLPYTECYDPVTGEWKSLAKLPEFTKSEYAVCALRNDILVSGGRINSRDVWIYNSQLNIWIRVASLNKGRWRHKMAVLLGKVYVVGGYDGQNRLSSVECYDSFSNRWTEVAPLKEAVSSPAVTSCVGKLFVIGGGPDDNTCSDKVQSYDPETNSWLLRAAIPIAKRCITAVSLNNLIYVAGGLTKAIYCYDPVEDYWMHVQNTFSRQENCGMSVCNGKIYILGGRRENGEATDTILCYDPATSIITGVAAMPRPVSYHGCVTIHRYNEKCFKL</sequence>
<evidence type="ECO:0000250" key="1">
    <source>
        <dbReference type="UniProtKB" id="Q56A24"/>
    </source>
</evidence>
<evidence type="ECO:0000255" key="2">
    <source>
        <dbReference type="PROSITE-ProRule" id="PRU00037"/>
    </source>
</evidence>
<evidence type="ECO:0000269" key="3">
    <source>
    </source>
</evidence>
<evidence type="ECO:0000269" key="4">
    <source>
    </source>
</evidence>
<evidence type="ECO:0000269" key="5">
    <source>
    </source>
</evidence>
<evidence type="ECO:0000303" key="6">
    <source>
    </source>
</evidence>
<evidence type="ECO:0000305" key="7"/>
<protein>
    <recommendedName>
        <fullName>Kelch-like protein 24</fullName>
    </recommendedName>
    <alternativeName>
        <fullName>Kainate receptor-interacting protein for GluR6</fullName>
        <shortName>KRIP6</shortName>
    </alternativeName>
    <alternativeName>
        <fullName>Protein DRE1</fullName>
    </alternativeName>
</protein>
<proteinExistence type="evidence at protein level"/>
<dbReference type="EMBL" id="AY422472">
    <property type="protein sequence ID" value="AAR13703.1"/>
    <property type="molecule type" value="mRNA"/>
</dbReference>
<dbReference type="EMBL" id="DQ925701">
    <property type="protein sequence ID" value="ABI96896.1"/>
    <property type="molecule type" value="mRNA"/>
</dbReference>
<dbReference type="EMBL" id="AK000066">
    <property type="protein sequence ID" value="BAA90921.1"/>
    <property type="status" value="ALT_INIT"/>
    <property type="molecule type" value="mRNA"/>
</dbReference>
<dbReference type="EMBL" id="AK026326">
    <property type="protein sequence ID" value="BAB15447.1"/>
    <property type="status" value="ALT_SEQ"/>
    <property type="molecule type" value="mRNA"/>
</dbReference>
<dbReference type="EMBL" id="BX648466">
    <property type="protein sequence ID" value="CAI46031.1"/>
    <property type="molecule type" value="mRNA"/>
</dbReference>
<dbReference type="EMBL" id="BX648812">
    <property type="protein sequence ID" value="CAI46002.1"/>
    <property type="molecule type" value="mRNA"/>
</dbReference>
<dbReference type="EMBL" id="BC142993">
    <property type="protein sequence ID" value="AAI42994.1"/>
    <property type="molecule type" value="mRNA"/>
</dbReference>
<dbReference type="CCDS" id="CCDS3246.1">
    <molecule id="Q6TFL4-1"/>
</dbReference>
<dbReference type="RefSeq" id="NP_001336348.1">
    <molecule id="Q6TFL4-1"/>
    <property type="nucleotide sequence ID" value="NM_001349419.1"/>
</dbReference>
<dbReference type="RefSeq" id="NP_001336349.1">
    <molecule id="Q6TFL4-1"/>
    <property type="nucleotide sequence ID" value="NM_001349420.1"/>
</dbReference>
<dbReference type="RefSeq" id="NP_001336350.1">
    <molecule id="Q6TFL4-1"/>
    <property type="nucleotide sequence ID" value="NM_001349421.1"/>
</dbReference>
<dbReference type="RefSeq" id="NP_001336351.1">
    <molecule id="Q6TFL4-1"/>
    <property type="nucleotide sequence ID" value="NM_001349422.1"/>
</dbReference>
<dbReference type="RefSeq" id="NP_001336352.1">
    <molecule id="Q6TFL4-1"/>
    <property type="nucleotide sequence ID" value="NM_001349423.1"/>
</dbReference>
<dbReference type="RefSeq" id="NP_001336353.1">
    <molecule id="Q6TFL4-1"/>
    <property type="nucleotide sequence ID" value="NM_001349424.1"/>
</dbReference>
<dbReference type="RefSeq" id="NP_001336354.1">
    <molecule id="Q6TFL4-1"/>
    <property type="nucleotide sequence ID" value="NM_001349425.1"/>
</dbReference>
<dbReference type="RefSeq" id="NP_001336355.1">
    <molecule id="Q6TFL4-1"/>
    <property type="nucleotide sequence ID" value="NM_001349426.1"/>
</dbReference>
<dbReference type="RefSeq" id="NP_060114.2">
    <molecule id="Q6TFL4-1"/>
    <property type="nucleotide sequence ID" value="NM_017644.3"/>
</dbReference>
<dbReference type="RefSeq" id="XP_005247609.1">
    <molecule id="Q6TFL4-1"/>
    <property type="nucleotide sequence ID" value="XM_005247552.3"/>
</dbReference>
<dbReference type="RefSeq" id="XP_005247610.1">
    <property type="nucleotide sequence ID" value="XM_005247553.1"/>
</dbReference>
<dbReference type="RefSeq" id="XP_005247611.1">
    <property type="nucleotide sequence ID" value="XM_005247554.2"/>
</dbReference>
<dbReference type="RefSeq" id="XP_005247612.1">
    <property type="nucleotide sequence ID" value="XM_005247555.1"/>
</dbReference>
<dbReference type="RefSeq" id="XP_005247613.1">
    <property type="nucleotide sequence ID" value="XM_005247556.1"/>
</dbReference>
<dbReference type="RefSeq" id="XP_011511240.1">
    <property type="nucleotide sequence ID" value="XM_011512938.2"/>
</dbReference>
<dbReference type="RefSeq" id="XP_016862148.1">
    <property type="nucleotide sequence ID" value="XM_017006659.1"/>
</dbReference>
<dbReference type="RefSeq" id="XP_016862149.1">
    <property type="nucleotide sequence ID" value="XM_017006660.1"/>
</dbReference>
<dbReference type="RefSeq" id="XP_047304328.1">
    <molecule id="Q6TFL4-1"/>
    <property type="nucleotide sequence ID" value="XM_047448372.1"/>
</dbReference>
<dbReference type="RefSeq" id="XP_047304329.1">
    <molecule id="Q6TFL4-1"/>
    <property type="nucleotide sequence ID" value="XM_047448373.1"/>
</dbReference>
<dbReference type="RefSeq" id="XP_047304330.1">
    <molecule id="Q6TFL4-1"/>
    <property type="nucleotide sequence ID" value="XM_047448374.1"/>
</dbReference>
<dbReference type="RefSeq" id="XP_054202939.1">
    <molecule id="Q6TFL4-1"/>
    <property type="nucleotide sequence ID" value="XM_054346964.1"/>
</dbReference>
<dbReference type="RefSeq" id="XP_054202940.1">
    <molecule id="Q6TFL4-1"/>
    <property type="nucleotide sequence ID" value="XM_054346965.1"/>
</dbReference>
<dbReference type="RefSeq" id="XP_054202941.1">
    <molecule id="Q6TFL4-1"/>
    <property type="nucleotide sequence ID" value="XM_054346966.1"/>
</dbReference>
<dbReference type="RefSeq" id="XP_054202942.1">
    <molecule id="Q6TFL4-1"/>
    <property type="nucleotide sequence ID" value="XM_054346967.1"/>
</dbReference>
<dbReference type="SMR" id="Q6TFL4"/>
<dbReference type="BioGRID" id="120159">
    <property type="interactions" value="73"/>
</dbReference>
<dbReference type="ComplexPortal" id="CPX-8125">
    <property type="entry name" value="CRL3 E3 ubiquitin ligase complex, KLHL24 variant"/>
</dbReference>
<dbReference type="CORUM" id="Q6TFL4"/>
<dbReference type="FunCoup" id="Q6TFL4">
    <property type="interactions" value="236"/>
</dbReference>
<dbReference type="IntAct" id="Q6TFL4">
    <property type="interactions" value="58"/>
</dbReference>
<dbReference type="MINT" id="Q6TFL4"/>
<dbReference type="STRING" id="9606.ENSP00000395012"/>
<dbReference type="GlyGen" id="Q6TFL4">
    <property type="glycosylation" value="1 site, 1 O-linked glycan (1 site)"/>
</dbReference>
<dbReference type="iPTMnet" id="Q6TFL4"/>
<dbReference type="PhosphoSitePlus" id="Q6TFL4"/>
<dbReference type="BioMuta" id="KLHL24"/>
<dbReference type="DMDM" id="74722812"/>
<dbReference type="jPOST" id="Q6TFL4"/>
<dbReference type="MassIVE" id="Q6TFL4"/>
<dbReference type="PaxDb" id="9606-ENSP00000395012"/>
<dbReference type="PeptideAtlas" id="Q6TFL4"/>
<dbReference type="ProteomicsDB" id="67392">
    <molecule id="Q6TFL4-1"/>
</dbReference>
<dbReference type="ProteomicsDB" id="67393">
    <molecule id="Q6TFL4-2"/>
</dbReference>
<dbReference type="Antibodypedia" id="54833">
    <property type="antibodies" value="82 antibodies from 13 providers"/>
</dbReference>
<dbReference type="DNASU" id="54800"/>
<dbReference type="Ensembl" id="ENST00000242810.11">
    <molecule id="Q6TFL4-1"/>
    <property type="protein sequence ID" value="ENSP00000242810.6"/>
    <property type="gene ID" value="ENSG00000114796.16"/>
</dbReference>
<dbReference type="Ensembl" id="ENST00000454652.6">
    <molecule id="Q6TFL4-1"/>
    <property type="protein sequence ID" value="ENSP00000395012.1"/>
    <property type="gene ID" value="ENSG00000114796.16"/>
</dbReference>
<dbReference type="Ensembl" id="ENST00000476808.1">
    <molecule id="Q6TFL4-2"/>
    <property type="protein sequence ID" value="ENSP00000419010.1"/>
    <property type="gene ID" value="ENSG00000114796.16"/>
</dbReference>
<dbReference type="GeneID" id="54800"/>
<dbReference type="KEGG" id="hsa:54800"/>
<dbReference type="MANE-Select" id="ENST00000242810.11">
    <property type="protein sequence ID" value="ENSP00000242810.6"/>
    <property type="RefSeq nucleotide sequence ID" value="NM_017644.3"/>
    <property type="RefSeq protein sequence ID" value="NP_060114.2"/>
</dbReference>
<dbReference type="UCSC" id="uc003flv.4">
    <molecule id="Q6TFL4-1"/>
    <property type="organism name" value="human"/>
</dbReference>
<dbReference type="AGR" id="HGNC:25947"/>
<dbReference type="CTD" id="54800"/>
<dbReference type="DisGeNET" id="54800"/>
<dbReference type="GeneCards" id="KLHL24"/>
<dbReference type="GeneReviews" id="KLHL24"/>
<dbReference type="HGNC" id="HGNC:25947">
    <property type="gene designation" value="KLHL24"/>
</dbReference>
<dbReference type="HPA" id="ENSG00000114796">
    <property type="expression patterns" value="Low tissue specificity"/>
</dbReference>
<dbReference type="MalaCards" id="KLHL24"/>
<dbReference type="MIM" id="611295">
    <property type="type" value="gene"/>
</dbReference>
<dbReference type="MIM" id="617294">
    <property type="type" value="phenotype"/>
</dbReference>
<dbReference type="MIM" id="620236">
    <property type="type" value="phenotype"/>
</dbReference>
<dbReference type="neXtProt" id="NX_Q6TFL4"/>
<dbReference type="OpenTargets" id="ENSG00000114796"/>
<dbReference type="Orphanet" id="508529">
    <property type="disease" value="Intermediate epidermolysis bullosa simplex with cardiomyopathy"/>
</dbReference>
<dbReference type="PharmGKB" id="PA142671576"/>
<dbReference type="VEuPathDB" id="HostDB:ENSG00000114796"/>
<dbReference type="eggNOG" id="KOG1721">
    <property type="taxonomic scope" value="Eukaryota"/>
</dbReference>
<dbReference type="eggNOG" id="KOG4441">
    <property type="taxonomic scope" value="Eukaryota"/>
</dbReference>
<dbReference type="GeneTree" id="ENSGT00940000154345"/>
<dbReference type="HOGENOM" id="CLU_004253_14_6_1"/>
<dbReference type="InParanoid" id="Q6TFL4"/>
<dbReference type="OMA" id="NDCYDPV"/>
<dbReference type="OrthoDB" id="19132at2759"/>
<dbReference type="PAN-GO" id="Q6TFL4">
    <property type="GO annotations" value="0 GO annotations based on evolutionary models"/>
</dbReference>
<dbReference type="PhylomeDB" id="Q6TFL4"/>
<dbReference type="TreeFam" id="TF351654"/>
<dbReference type="PathwayCommons" id="Q6TFL4"/>
<dbReference type="SignaLink" id="Q6TFL4"/>
<dbReference type="BioGRID-ORCS" id="54800">
    <property type="hits" value="9 hits in 1190 CRISPR screens"/>
</dbReference>
<dbReference type="ChiTaRS" id="KLHL24">
    <property type="organism name" value="human"/>
</dbReference>
<dbReference type="GenomeRNAi" id="54800"/>
<dbReference type="Pharos" id="Q6TFL4">
    <property type="development level" value="Tbio"/>
</dbReference>
<dbReference type="PRO" id="PR:Q6TFL4"/>
<dbReference type="Proteomes" id="UP000005640">
    <property type="component" value="Chromosome 3"/>
</dbReference>
<dbReference type="RNAct" id="Q6TFL4">
    <property type="molecule type" value="protein"/>
</dbReference>
<dbReference type="Bgee" id="ENSG00000114796">
    <property type="expression patterns" value="Expressed in endothelial cell and 222 other cell types or tissues"/>
</dbReference>
<dbReference type="ExpressionAtlas" id="Q6TFL4">
    <property type="expression patterns" value="baseline and differential"/>
</dbReference>
<dbReference type="GO" id="GO:0005912">
    <property type="term" value="C:adherens junction"/>
    <property type="evidence" value="ECO:0000314"/>
    <property type="project" value="UniProtKB"/>
</dbReference>
<dbReference type="GO" id="GO:0030424">
    <property type="term" value="C:axon"/>
    <property type="evidence" value="ECO:0007669"/>
    <property type="project" value="UniProtKB-SubCell"/>
</dbReference>
<dbReference type="GO" id="GO:0031463">
    <property type="term" value="C:Cul3-RING ubiquitin ligase complex"/>
    <property type="evidence" value="ECO:0000315"/>
    <property type="project" value="UniProtKB"/>
</dbReference>
<dbReference type="GO" id="GO:0005737">
    <property type="term" value="C:cytoplasm"/>
    <property type="evidence" value="ECO:0000314"/>
    <property type="project" value="UniProtKB"/>
</dbReference>
<dbReference type="GO" id="GO:0030057">
    <property type="term" value="C:desmosome"/>
    <property type="evidence" value="ECO:0000314"/>
    <property type="project" value="UniProtKB"/>
</dbReference>
<dbReference type="GO" id="GO:0043204">
    <property type="term" value="C:perikaryon"/>
    <property type="evidence" value="ECO:0007669"/>
    <property type="project" value="UniProtKB-SubCell"/>
</dbReference>
<dbReference type="GO" id="GO:1990756">
    <property type="term" value="F:ubiquitin-like ligase-substrate adaptor activity"/>
    <property type="evidence" value="ECO:0000318"/>
    <property type="project" value="GO_Central"/>
</dbReference>
<dbReference type="GO" id="GO:0045109">
    <property type="term" value="P:intermediate filament organization"/>
    <property type="evidence" value="ECO:0000315"/>
    <property type="project" value="UniProtKB"/>
</dbReference>
<dbReference type="GO" id="GO:0043161">
    <property type="term" value="P:proteasome-mediated ubiquitin-dependent protein catabolic process"/>
    <property type="evidence" value="ECO:0000318"/>
    <property type="project" value="GO_Central"/>
</dbReference>
<dbReference type="GO" id="GO:0051865">
    <property type="term" value="P:protein autoubiquitination"/>
    <property type="evidence" value="ECO:0000315"/>
    <property type="project" value="UniProtKB"/>
</dbReference>
<dbReference type="GO" id="GO:0016567">
    <property type="term" value="P:protein ubiquitination"/>
    <property type="evidence" value="ECO:0000314"/>
    <property type="project" value="UniProtKB"/>
</dbReference>
<dbReference type="CDD" id="cd18463">
    <property type="entry name" value="BACK_KLHL24"/>
    <property type="match status" value="1"/>
</dbReference>
<dbReference type="CDD" id="cd18253">
    <property type="entry name" value="BTB_POZ_KLHL24_KRIP6"/>
    <property type="match status" value="1"/>
</dbReference>
<dbReference type="FunFam" id="1.25.40.420:FF:000001">
    <property type="entry name" value="Kelch-like family member 12"/>
    <property type="match status" value="1"/>
</dbReference>
<dbReference type="FunFam" id="2.120.10.80:FF:000023">
    <property type="entry name" value="Kelch-like family member 24"/>
    <property type="match status" value="1"/>
</dbReference>
<dbReference type="FunFam" id="3.30.710.10:FF:000071">
    <property type="entry name" value="Kelch-like family member 24"/>
    <property type="match status" value="1"/>
</dbReference>
<dbReference type="Gene3D" id="1.25.40.420">
    <property type="match status" value="1"/>
</dbReference>
<dbReference type="Gene3D" id="2.120.10.80">
    <property type="entry name" value="Kelch-type beta propeller"/>
    <property type="match status" value="1"/>
</dbReference>
<dbReference type="Gene3D" id="3.30.710.10">
    <property type="entry name" value="Potassium Channel Kv1.1, Chain A"/>
    <property type="match status" value="1"/>
</dbReference>
<dbReference type="InterPro" id="IPR011705">
    <property type="entry name" value="BACK"/>
</dbReference>
<dbReference type="InterPro" id="IPR017096">
    <property type="entry name" value="BTB-kelch_protein"/>
</dbReference>
<dbReference type="InterPro" id="IPR000210">
    <property type="entry name" value="BTB/POZ_dom"/>
</dbReference>
<dbReference type="InterPro" id="IPR030596">
    <property type="entry name" value="BTB_POZ_KLHL24"/>
</dbReference>
<dbReference type="InterPro" id="IPR015915">
    <property type="entry name" value="Kelch-typ_b-propeller"/>
</dbReference>
<dbReference type="InterPro" id="IPR006652">
    <property type="entry name" value="Kelch_1"/>
</dbReference>
<dbReference type="InterPro" id="IPR047071">
    <property type="entry name" value="KLHL24_BACK"/>
</dbReference>
<dbReference type="InterPro" id="IPR011333">
    <property type="entry name" value="SKP1/BTB/POZ_sf"/>
</dbReference>
<dbReference type="PANTHER" id="PTHR24412">
    <property type="entry name" value="KELCH PROTEIN"/>
    <property type="match status" value="1"/>
</dbReference>
<dbReference type="PANTHER" id="PTHR24412:SF215">
    <property type="entry name" value="KELCH-LIKE PROTEIN 24"/>
    <property type="match status" value="1"/>
</dbReference>
<dbReference type="Pfam" id="PF07707">
    <property type="entry name" value="BACK"/>
    <property type="match status" value="1"/>
</dbReference>
<dbReference type="Pfam" id="PF00651">
    <property type="entry name" value="BTB"/>
    <property type="match status" value="1"/>
</dbReference>
<dbReference type="Pfam" id="PF01344">
    <property type="entry name" value="Kelch_1"/>
    <property type="match status" value="1"/>
</dbReference>
<dbReference type="Pfam" id="PF24681">
    <property type="entry name" value="Kelch_KLHDC2_KLHL20_DRC7"/>
    <property type="match status" value="1"/>
</dbReference>
<dbReference type="PIRSF" id="PIRSF037037">
    <property type="entry name" value="Kelch-like_protein_gigaxonin"/>
    <property type="match status" value="1"/>
</dbReference>
<dbReference type="SMART" id="SM00875">
    <property type="entry name" value="BACK"/>
    <property type="match status" value="1"/>
</dbReference>
<dbReference type="SMART" id="SM00225">
    <property type="entry name" value="BTB"/>
    <property type="match status" value="1"/>
</dbReference>
<dbReference type="SMART" id="SM00612">
    <property type="entry name" value="Kelch"/>
    <property type="match status" value="6"/>
</dbReference>
<dbReference type="SUPFAM" id="SSF117281">
    <property type="entry name" value="Kelch motif"/>
    <property type="match status" value="1"/>
</dbReference>
<dbReference type="SUPFAM" id="SSF54695">
    <property type="entry name" value="POZ domain"/>
    <property type="match status" value="1"/>
</dbReference>
<dbReference type="PROSITE" id="PS50097">
    <property type="entry name" value="BTB"/>
    <property type="match status" value="1"/>
</dbReference>